<accession>A6VH54</accession>
<proteinExistence type="inferred from homology"/>
<name>CYDE_METM7</name>
<evidence type="ECO:0000250" key="1">
    <source>
        <dbReference type="UniProtKB" id="Q58431"/>
    </source>
</evidence>
<evidence type="ECO:0000305" key="2"/>
<feature type="chain" id="PRO_0000339871" description="L-cysteine desulfidase">
    <location>
        <begin position="1"/>
        <end position="397"/>
    </location>
</feature>
<feature type="active site" description="Proton acceptor" evidence="1">
    <location>
        <position position="23"/>
    </location>
</feature>
<feature type="binding site" evidence="1">
    <location>
        <position position="288"/>
    </location>
    <ligand>
        <name>[4Fe-4S] cluster</name>
        <dbReference type="ChEBI" id="CHEBI:49883"/>
    </ligand>
</feature>
<feature type="binding site" evidence="1">
    <location>
        <position position="330"/>
    </location>
    <ligand>
        <name>[4Fe-4S] cluster</name>
        <dbReference type="ChEBI" id="CHEBI:49883"/>
    </ligand>
</feature>
<feature type="binding site" evidence="1">
    <location>
        <position position="337"/>
    </location>
    <ligand>
        <name>[4Fe-4S] cluster</name>
        <dbReference type="ChEBI" id="CHEBI:49883"/>
    </ligand>
</feature>
<comment type="function">
    <text evidence="1">Catalyzes the cleavage of L-cysteine to form 2-aminoprop-2-enoate and sulfide. The former then spontaneously hydrolyzes to pyruvate and NH(3). May be responsible for the production of sulfide required for the biosynthesis of iron-sulfur centers in this archaea.</text>
</comment>
<comment type="catalytic activity">
    <reaction evidence="1">
        <text>L-cysteine + H2O = hydrogen sulfide + pyruvate + NH4(+) + H(+)</text>
        <dbReference type="Rhea" id="RHEA:24931"/>
        <dbReference type="ChEBI" id="CHEBI:15361"/>
        <dbReference type="ChEBI" id="CHEBI:15377"/>
        <dbReference type="ChEBI" id="CHEBI:15378"/>
        <dbReference type="ChEBI" id="CHEBI:28938"/>
        <dbReference type="ChEBI" id="CHEBI:29919"/>
        <dbReference type="ChEBI" id="CHEBI:35235"/>
        <dbReference type="EC" id="4.4.1.28"/>
    </reaction>
</comment>
<comment type="cofactor">
    <cofactor evidence="1">
        <name>[4Fe-4S] cluster</name>
        <dbReference type="ChEBI" id="CHEBI:49883"/>
    </cofactor>
    <text evidence="1">Binds 1 [4Fe-4S] cluster per subunit.</text>
</comment>
<comment type="subunit">
    <text evidence="1">Homotrimer.</text>
</comment>
<comment type="similarity">
    <text evidence="2">Belongs to the L-cysteine desulfidase family.</text>
</comment>
<organism>
    <name type="scientific">Methanococcus maripaludis (strain C7 / ATCC BAA-1331)</name>
    <dbReference type="NCBI Taxonomy" id="426368"/>
    <lineage>
        <taxon>Archaea</taxon>
        <taxon>Methanobacteriati</taxon>
        <taxon>Methanobacteriota</taxon>
        <taxon>Methanomada group</taxon>
        <taxon>Methanococci</taxon>
        <taxon>Methanococcales</taxon>
        <taxon>Methanococcaceae</taxon>
        <taxon>Methanococcus</taxon>
    </lineage>
</organism>
<sequence length="397" mass="43732">MDDSKRILITKVLKNEVTEALGCTEVGLIGYAISLCNISYPFSIEKIEVTLNNGSFKNAYAVGVPNTKKYGILPAVVGGLLGNSKNKLLIFNDIKYDQKLEDFIKKRLEVKVLDGPLYCGVKIKDTSGKFFESLIKDNHLNVVIPKIEKEKISLEITDFEKEEYKSLELTDFLNYLDEIPEEIINLVEKTIYTNKNLIKGDFLNYGNDILSNMVNKTTSACNTRMTGENMPAMSVAKSGNMGLMATLPIISYDNLTENNFEKLKKSLLLAMLVTIYSTYNSSYLSSMCGCVSKGGMGAVIGLCYYKNGKNLKKLNSAARAFTANLPGIICDGGKVGCALKLASGCFAAYSSLYVEISHENGIVGKNFKECVQNISKISKAMGDLDCDIVKIMSKKEM</sequence>
<reference key="1">
    <citation type="submission" date="2007-06" db="EMBL/GenBank/DDBJ databases">
        <title>Complete sequence of Methanococcus maripaludis C7.</title>
        <authorList>
            <consortium name="US DOE Joint Genome Institute"/>
            <person name="Copeland A."/>
            <person name="Lucas S."/>
            <person name="Lapidus A."/>
            <person name="Barry K."/>
            <person name="Glavina del Rio T."/>
            <person name="Dalin E."/>
            <person name="Tice H."/>
            <person name="Pitluck S."/>
            <person name="Clum A."/>
            <person name="Schmutz J."/>
            <person name="Larimer F."/>
            <person name="Land M."/>
            <person name="Hauser L."/>
            <person name="Kyrpides N."/>
            <person name="Anderson I."/>
            <person name="Sieprawska-Lupa M."/>
            <person name="Whitman W.B."/>
            <person name="Richardson P."/>
        </authorList>
    </citation>
    <scope>NUCLEOTIDE SEQUENCE [LARGE SCALE GENOMIC DNA]</scope>
    <source>
        <strain>C7 / ATCC BAA-1331</strain>
    </source>
</reference>
<protein>
    <recommendedName>
        <fullName evidence="1">L-cysteine desulfidase</fullName>
        <ecNumber evidence="1">4.4.1.28</ecNumber>
    </recommendedName>
    <alternativeName>
        <fullName>L-cysteine desulfhydrase</fullName>
    </alternativeName>
</protein>
<dbReference type="EC" id="4.4.1.28" evidence="1"/>
<dbReference type="EMBL" id="CP000745">
    <property type="protein sequence ID" value="ABR65780.1"/>
    <property type="molecule type" value="Genomic_DNA"/>
</dbReference>
<dbReference type="STRING" id="426368.MmarC7_0713"/>
<dbReference type="KEGG" id="mmz:MmarC7_0713"/>
<dbReference type="eggNOG" id="arCOG05065">
    <property type="taxonomic scope" value="Archaea"/>
</dbReference>
<dbReference type="HOGENOM" id="CLU_051840_0_0_2"/>
<dbReference type="OrthoDB" id="60297at2157"/>
<dbReference type="GO" id="GO:0051539">
    <property type="term" value="F:4 iron, 4 sulfur cluster binding"/>
    <property type="evidence" value="ECO:0007669"/>
    <property type="project" value="UniProtKB-KW"/>
</dbReference>
<dbReference type="GO" id="GO:0080146">
    <property type="term" value="F:L-cysteine desulfhydrase activity"/>
    <property type="evidence" value="ECO:0007669"/>
    <property type="project" value="TreeGrafter"/>
</dbReference>
<dbReference type="GO" id="GO:0046872">
    <property type="term" value="F:metal ion binding"/>
    <property type="evidence" value="ECO:0007669"/>
    <property type="project" value="UniProtKB-KW"/>
</dbReference>
<dbReference type="GO" id="GO:0019450">
    <property type="term" value="P:L-cysteine catabolic process to pyruvate"/>
    <property type="evidence" value="ECO:0007669"/>
    <property type="project" value="TreeGrafter"/>
</dbReference>
<dbReference type="InterPro" id="IPR005130">
    <property type="entry name" value="Ser_deHydtase-like_asu"/>
</dbReference>
<dbReference type="InterPro" id="IPR021144">
    <property type="entry name" value="UPF0597"/>
</dbReference>
<dbReference type="PANTHER" id="PTHR30501">
    <property type="entry name" value="UPF0597 PROTEIN YHAM"/>
    <property type="match status" value="1"/>
</dbReference>
<dbReference type="PANTHER" id="PTHR30501:SF2">
    <property type="entry name" value="UPF0597 PROTEIN YHAM"/>
    <property type="match status" value="1"/>
</dbReference>
<dbReference type="Pfam" id="PF03313">
    <property type="entry name" value="SDH_alpha"/>
    <property type="match status" value="1"/>
</dbReference>
<dbReference type="PIRSF" id="PIRSF006054">
    <property type="entry name" value="UCP006054"/>
    <property type="match status" value="1"/>
</dbReference>
<keyword id="KW-0004">4Fe-4S</keyword>
<keyword id="KW-0408">Iron</keyword>
<keyword id="KW-0411">Iron-sulfur</keyword>
<keyword id="KW-0456">Lyase</keyword>
<keyword id="KW-0479">Metal-binding</keyword>
<gene>
    <name type="ordered locus">MmarC7_0713</name>
</gene>